<gene>
    <name evidence="1" type="primary">cbiD</name>
    <name type="ordered locus">Msm_0837</name>
</gene>
<sequence>MTNENYTGVTTGTIATACSLAALESILDTSDIDCVKVKTPKKTLDIIIDECKRLSHSSACAVAHKNPYNDPDVTVGLAIVATVELLDKTSDGDSVIITGGEGVGKITKPGLQIPVGEYAINPVPRRMIRKNLERILPEDKVAKVTISIPEGRKIAKKTMNPKLGIVGGISVIGTTGIARSMSSEAYKNSIVTQIDVALALNLDNLVFVPGNIGEKLALKQLDITKQHIIQTGNYVGFMFEEAKKRGIDEFTFFGHIGKLIKIAGGIFNTKHAIADGRREIMITHAGICGADTKTLQKLYDSKTTEDMLDILDEENLHLDVCNSIALAIKERCMQRFDLDLNVILVDMEGNYLNDNFERFLL</sequence>
<evidence type="ECO:0000255" key="1">
    <source>
        <dbReference type="HAMAP-Rule" id="MF_00787"/>
    </source>
</evidence>
<reference key="1">
    <citation type="journal article" date="2007" name="Proc. Natl. Acad. Sci. U.S.A.">
        <title>Genomic and metabolic adaptations of Methanobrevibacter smithii to the human gut.</title>
        <authorList>
            <person name="Samuel B.S."/>
            <person name="Hansen E.E."/>
            <person name="Manchester J.K."/>
            <person name="Coutinho P.M."/>
            <person name="Henrissat B."/>
            <person name="Fulton R."/>
            <person name="Latreille P."/>
            <person name="Kim K."/>
            <person name="Wilson R.K."/>
            <person name="Gordon J.I."/>
        </authorList>
    </citation>
    <scope>NUCLEOTIDE SEQUENCE [LARGE SCALE GENOMIC DNA]</scope>
    <source>
        <strain>ATCC 35061 / DSM 861 / OCM 144 / PS</strain>
    </source>
</reference>
<proteinExistence type="inferred from homology"/>
<protein>
    <recommendedName>
        <fullName evidence="1">Cobalt-precorrin-5B C(1)-methyltransferase</fullName>
        <ecNumber evidence="1">2.1.1.195</ecNumber>
    </recommendedName>
    <alternativeName>
        <fullName evidence="1">Cobalt-precorrin-6A synthase</fullName>
    </alternativeName>
</protein>
<name>CBID_METS3</name>
<comment type="function">
    <text evidence="1">Catalyzes the methylation of C-1 in cobalt-precorrin-5B to form cobalt-precorrin-6A.</text>
</comment>
<comment type="catalytic activity">
    <reaction evidence="1">
        <text>Co-precorrin-5B + S-adenosyl-L-methionine = Co-precorrin-6A + S-adenosyl-L-homocysteine</text>
        <dbReference type="Rhea" id="RHEA:26285"/>
        <dbReference type="ChEBI" id="CHEBI:57856"/>
        <dbReference type="ChEBI" id="CHEBI:59789"/>
        <dbReference type="ChEBI" id="CHEBI:60063"/>
        <dbReference type="ChEBI" id="CHEBI:60064"/>
        <dbReference type="EC" id="2.1.1.195"/>
    </reaction>
</comment>
<comment type="pathway">
    <text evidence="1">Cofactor biosynthesis; adenosylcobalamin biosynthesis; cob(II)yrinate a,c-diamide from sirohydrochlorin (anaerobic route): step 6/10.</text>
</comment>
<comment type="similarity">
    <text evidence="1">Belongs to the CbiD family.</text>
</comment>
<keyword id="KW-0169">Cobalamin biosynthesis</keyword>
<keyword id="KW-0489">Methyltransferase</keyword>
<keyword id="KW-0949">S-adenosyl-L-methionine</keyword>
<keyword id="KW-0808">Transferase</keyword>
<accession>A5ULG4</accession>
<organism>
    <name type="scientific">Methanobrevibacter smithii (strain ATCC 35061 / DSM 861 / OCM 144 / PS)</name>
    <dbReference type="NCBI Taxonomy" id="420247"/>
    <lineage>
        <taxon>Archaea</taxon>
        <taxon>Methanobacteriati</taxon>
        <taxon>Methanobacteriota</taxon>
        <taxon>Methanomada group</taxon>
        <taxon>Methanobacteria</taxon>
        <taxon>Methanobacteriales</taxon>
        <taxon>Methanobacteriaceae</taxon>
        <taxon>Methanobrevibacter</taxon>
    </lineage>
</organism>
<dbReference type="EC" id="2.1.1.195" evidence="1"/>
<dbReference type="EMBL" id="CP000678">
    <property type="protein sequence ID" value="ABQ87042.1"/>
    <property type="molecule type" value="Genomic_DNA"/>
</dbReference>
<dbReference type="RefSeq" id="WP_004033091.1">
    <property type="nucleotide sequence ID" value="NZ_CP117965.1"/>
</dbReference>
<dbReference type="SMR" id="A5ULG4"/>
<dbReference type="STRING" id="420247.Msm_0837"/>
<dbReference type="EnsemblBacteria" id="ABQ87042">
    <property type="protein sequence ID" value="ABQ87042"/>
    <property type="gene ID" value="Msm_0837"/>
</dbReference>
<dbReference type="GeneID" id="78817468"/>
<dbReference type="KEGG" id="msi:Msm_0837"/>
<dbReference type="PATRIC" id="fig|420247.28.peg.834"/>
<dbReference type="eggNOG" id="arCOG04383">
    <property type="taxonomic scope" value="Archaea"/>
</dbReference>
<dbReference type="HOGENOM" id="CLU_041273_1_0_2"/>
<dbReference type="UniPathway" id="UPA00148">
    <property type="reaction ID" value="UER00227"/>
</dbReference>
<dbReference type="Proteomes" id="UP000001992">
    <property type="component" value="Chromosome"/>
</dbReference>
<dbReference type="GO" id="GO:0043780">
    <property type="term" value="F:cobalt-precorrin-5B C1-methyltransferase activity"/>
    <property type="evidence" value="ECO:0007669"/>
    <property type="project" value="RHEA"/>
</dbReference>
<dbReference type="GO" id="GO:0019251">
    <property type="term" value="P:anaerobic cobalamin biosynthetic process"/>
    <property type="evidence" value="ECO:0007669"/>
    <property type="project" value="UniProtKB-UniRule"/>
</dbReference>
<dbReference type="GO" id="GO:0032259">
    <property type="term" value="P:methylation"/>
    <property type="evidence" value="ECO:0007669"/>
    <property type="project" value="UniProtKB-KW"/>
</dbReference>
<dbReference type="Gene3D" id="3.30.2110.10">
    <property type="entry name" value="CbiD-like"/>
    <property type="match status" value="1"/>
</dbReference>
<dbReference type="HAMAP" id="MF_00787">
    <property type="entry name" value="CbiD"/>
    <property type="match status" value="1"/>
</dbReference>
<dbReference type="InterPro" id="IPR002748">
    <property type="entry name" value="CbiD"/>
</dbReference>
<dbReference type="InterPro" id="IPR036074">
    <property type="entry name" value="CbiD_sf"/>
</dbReference>
<dbReference type="NCBIfam" id="TIGR00312">
    <property type="entry name" value="cbiD"/>
    <property type="match status" value="1"/>
</dbReference>
<dbReference type="PANTHER" id="PTHR35863">
    <property type="entry name" value="COBALT-PRECORRIN-5B C(1)-METHYLTRANSFERASE"/>
    <property type="match status" value="1"/>
</dbReference>
<dbReference type="PANTHER" id="PTHR35863:SF1">
    <property type="entry name" value="COBALT-PRECORRIN-5B C(1)-METHYLTRANSFERASE"/>
    <property type="match status" value="1"/>
</dbReference>
<dbReference type="Pfam" id="PF01888">
    <property type="entry name" value="CbiD"/>
    <property type="match status" value="1"/>
</dbReference>
<dbReference type="PIRSF" id="PIRSF026782">
    <property type="entry name" value="CbiD"/>
    <property type="match status" value="1"/>
</dbReference>
<dbReference type="SUPFAM" id="SSF111342">
    <property type="entry name" value="CbiD-like"/>
    <property type="match status" value="1"/>
</dbReference>
<feature type="chain" id="PRO_1000062247" description="Cobalt-precorrin-5B C(1)-methyltransferase">
    <location>
        <begin position="1"/>
        <end position="361"/>
    </location>
</feature>